<proteinExistence type="inferred from homology"/>
<accession>C0Q0I2</accession>
<gene>
    <name evidence="1" type="primary">feoC</name>
    <name type="ordered locus">SPC_3576</name>
</gene>
<name>FEOC_SALPC</name>
<protein>
    <recommendedName>
        <fullName evidence="1">Probable [Fe-S]-dependent transcriptional repressor</fullName>
    </recommendedName>
</protein>
<reference key="1">
    <citation type="journal article" date="2009" name="PLoS ONE">
        <title>Salmonella paratyphi C: genetic divergence from Salmonella choleraesuis and pathogenic convergence with Salmonella typhi.</title>
        <authorList>
            <person name="Liu W.-Q."/>
            <person name="Feng Y."/>
            <person name="Wang Y."/>
            <person name="Zou Q.-H."/>
            <person name="Chen F."/>
            <person name="Guo J.-T."/>
            <person name="Peng Y.-H."/>
            <person name="Jin Y."/>
            <person name="Li Y.-G."/>
            <person name="Hu S.-N."/>
            <person name="Johnston R.N."/>
            <person name="Liu G.-R."/>
            <person name="Liu S.-L."/>
        </authorList>
    </citation>
    <scope>NUCLEOTIDE SEQUENCE [LARGE SCALE GENOMIC DNA]</scope>
    <source>
        <strain>RKS4594</strain>
    </source>
</reference>
<feature type="chain" id="PRO_1000185677" description="Probable [Fe-S]-dependent transcriptional repressor">
    <location>
        <begin position="1"/>
        <end position="78"/>
    </location>
</feature>
<feature type="binding site" evidence="1">
    <location>
        <position position="56"/>
    </location>
    <ligand>
        <name>iron-sulfur cluster</name>
        <dbReference type="ChEBI" id="CHEBI:30408"/>
    </ligand>
</feature>
<feature type="binding site" evidence="1">
    <location>
        <position position="61"/>
    </location>
    <ligand>
        <name>iron-sulfur cluster</name>
        <dbReference type="ChEBI" id="CHEBI:30408"/>
    </ligand>
</feature>
<feature type="binding site" evidence="1">
    <location>
        <position position="64"/>
    </location>
    <ligand>
        <name>iron-sulfur cluster</name>
        <dbReference type="ChEBI" id="CHEBI:30408"/>
    </ligand>
</feature>
<feature type="binding site" evidence="1">
    <location>
        <position position="70"/>
    </location>
    <ligand>
        <name>iron-sulfur cluster</name>
        <dbReference type="ChEBI" id="CHEBI:30408"/>
    </ligand>
</feature>
<evidence type="ECO:0000255" key="1">
    <source>
        <dbReference type="HAMAP-Rule" id="MF_01586"/>
    </source>
</evidence>
<comment type="function">
    <text evidence="1">May function as a transcriptional regulator that controls feoABC expression.</text>
</comment>
<comment type="similarity">
    <text evidence="1">Belongs to the FeoC family.</text>
</comment>
<keyword id="KW-0238">DNA-binding</keyword>
<keyword id="KW-0408">Iron</keyword>
<keyword id="KW-0411">Iron-sulfur</keyword>
<keyword id="KW-0479">Metal-binding</keyword>
<keyword id="KW-0678">Repressor</keyword>
<keyword id="KW-0804">Transcription</keyword>
<keyword id="KW-0805">Transcription regulation</keyword>
<sequence length="78" mass="8648">MASLIQVRDLLALRGRMEATQISHTLHAPQPMIDAMLNQLEIMGKAVRIPEEADGCLSGSCKSCPEGKACLREWWALR</sequence>
<dbReference type="EMBL" id="CP000857">
    <property type="protein sequence ID" value="ACN47659.1"/>
    <property type="molecule type" value="Genomic_DNA"/>
</dbReference>
<dbReference type="RefSeq" id="WP_000157587.1">
    <property type="nucleotide sequence ID" value="NC_012125.1"/>
</dbReference>
<dbReference type="SMR" id="C0Q0I2"/>
<dbReference type="KEGG" id="sei:SPC_3576"/>
<dbReference type="HOGENOM" id="CLU_189182_0_0_6"/>
<dbReference type="Proteomes" id="UP000001599">
    <property type="component" value="Chromosome"/>
</dbReference>
<dbReference type="GO" id="GO:0003677">
    <property type="term" value="F:DNA binding"/>
    <property type="evidence" value="ECO:0007669"/>
    <property type="project" value="UniProtKB-KW"/>
</dbReference>
<dbReference type="GO" id="GO:0005506">
    <property type="term" value="F:iron ion binding"/>
    <property type="evidence" value="ECO:0007669"/>
    <property type="project" value="UniProtKB-UniRule"/>
</dbReference>
<dbReference type="GO" id="GO:0051536">
    <property type="term" value="F:iron-sulfur cluster binding"/>
    <property type="evidence" value="ECO:0007669"/>
    <property type="project" value="UniProtKB-KW"/>
</dbReference>
<dbReference type="Gene3D" id="1.10.10.10">
    <property type="entry name" value="Winged helix-like DNA-binding domain superfamily/Winged helix DNA-binding domain"/>
    <property type="match status" value="1"/>
</dbReference>
<dbReference type="HAMAP" id="MF_01586">
    <property type="entry name" value="FeoC"/>
    <property type="match status" value="1"/>
</dbReference>
<dbReference type="InterPro" id="IPR023732">
    <property type="entry name" value="FeoC"/>
</dbReference>
<dbReference type="InterPro" id="IPR015102">
    <property type="entry name" value="Tscrpt_reg_HTH_FeoC"/>
</dbReference>
<dbReference type="InterPro" id="IPR036388">
    <property type="entry name" value="WH-like_DNA-bd_sf"/>
</dbReference>
<dbReference type="InterPro" id="IPR036390">
    <property type="entry name" value="WH_DNA-bd_sf"/>
</dbReference>
<dbReference type="NCBIfam" id="NF011960">
    <property type="entry name" value="PRK15431.1"/>
    <property type="match status" value="1"/>
</dbReference>
<dbReference type="Pfam" id="PF09012">
    <property type="entry name" value="FeoC"/>
    <property type="match status" value="1"/>
</dbReference>
<dbReference type="SUPFAM" id="SSF46785">
    <property type="entry name" value="Winged helix' DNA-binding domain"/>
    <property type="match status" value="1"/>
</dbReference>
<organism>
    <name type="scientific">Salmonella paratyphi C (strain RKS4594)</name>
    <dbReference type="NCBI Taxonomy" id="476213"/>
    <lineage>
        <taxon>Bacteria</taxon>
        <taxon>Pseudomonadati</taxon>
        <taxon>Pseudomonadota</taxon>
        <taxon>Gammaproteobacteria</taxon>
        <taxon>Enterobacterales</taxon>
        <taxon>Enterobacteriaceae</taxon>
        <taxon>Salmonella</taxon>
    </lineage>
</organism>